<keyword id="KW-0963">Cytoplasm</keyword>
<keyword id="KW-0255">Endonuclease</keyword>
<keyword id="KW-0378">Hydrolase</keyword>
<keyword id="KW-0479">Metal-binding</keyword>
<keyword id="KW-0540">Nuclease</keyword>
<keyword id="KW-0690">Ribosome biogenesis</keyword>
<keyword id="KW-0698">rRNA processing</keyword>
<keyword id="KW-0862">Zinc</keyword>
<sequence length="154" mass="18312">MIEINVYYKKWYNVIRKPKSFVKNIINTSLIDLNIYEYKPIISIVLANNKLLQQLNYEYRKKNKPTNVLSFPYNKLDKNCYLGEIFISLDVLMNESVDLNIPIEHHTSHMLIHGLLHILDYDHEEPLDQYIMESIEIKLLDKLGIKNPYVSRET</sequence>
<organism>
    <name type="scientific">Ehrlichia canis (strain Jake)</name>
    <dbReference type="NCBI Taxonomy" id="269484"/>
    <lineage>
        <taxon>Bacteria</taxon>
        <taxon>Pseudomonadati</taxon>
        <taxon>Pseudomonadota</taxon>
        <taxon>Alphaproteobacteria</taxon>
        <taxon>Rickettsiales</taxon>
        <taxon>Anaplasmataceae</taxon>
        <taxon>Ehrlichia</taxon>
    </lineage>
</organism>
<gene>
    <name evidence="1" type="primary">ybeY</name>
    <name type="ordered locus">Ecaj_0927</name>
</gene>
<name>YBEY_EHRCJ</name>
<proteinExistence type="inferred from homology"/>
<dbReference type="EC" id="3.1.-.-" evidence="1"/>
<dbReference type="EMBL" id="CP000107">
    <property type="protein sequence ID" value="AAZ68958.1"/>
    <property type="molecule type" value="Genomic_DNA"/>
</dbReference>
<dbReference type="RefSeq" id="WP_011305031.1">
    <property type="nucleotide sequence ID" value="NC_007354.1"/>
</dbReference>
<dbReference type="SMR" id="Q3YQP7"/>
<dbReference type="FunCoup" id="Q3YQP7">
    <property type="interactions" value="169"/>
</dbReference>
<dbReference type="STRING" id="269484.Ecaj_0927"/>
<dbReference type="KEGG" id="ecn:Ecaj_0927"/>
<dbReference type="eggNOG" id="COG0319">
    <property type="taxonomic scope" value="Bacteria"/>
</dbReference>
<dbReference type="HOGENOM" id="CLU_106710_0_0_5"/>
<dbReference type="InParanoid" id="Q3YQP7"/>
<dbReference type="Proteomes" id="UP000000435">
    <property type="component" value="Chromosome"/>
</dbReference>
<dbReference type="GO" id="GO:0005737">
    <property type="term" value="C:cytoplasm"/>
    <property type="evidence" value="ECO:0007669"/>
    <property type="project" value="UniProtKB-SubCell"/>
</dbReference>
<dbReference type="GO" id="GO:0004222">
    <property type="term" value="F:metalloendopeptidase activity"/>
    <property type="evidence" value="ECO:0007669"/>
    <property type="project" value="InterPro"/>
</dbReference>
<dbReference type="GO" id="GO:0004521">
    <property type="term" value="F:RNA endonuclease activity"/>
    <property type="evidence" value="ECO:0007669"/>
    <property type="project" value="UniProtKB-UniRule"/>
</dbReference>
<dbReference type="GO" id="GO:0008270">
    <property type="term" value="F:zinc ion binding"/>
    <property type="evidence" value="ECO:0007669"/>
    <property type="project" value="UniProtKB-UniRule"/>
</dbReference>
<dbReference type="GO" id="GO:0006364">
    <property type="term" value="P:rRNA processing"/>
    <property type="evidence" value="ECO:0007669"/>
    <property type="project" value="UniProtKB-UniRule"/>
</dbReference>
<dbReference type="Gene3D" id="3.40.390.30">
    <property type="entry name" value="Metalloproteases ('zincins'), catalytic domain"/>
    <property type="match status" value="1"/>
</dbReference>
<dbReference type="HAMAP" id="MF_00009">
    <property type="entry name" value="Endoribonucl_YbeY"/>
    <property type="match status" value="1"/>
</dbReference>
<dbReference type="InterPro" id="IPR023091">
    <property type="entry name" value="MetalPrtase_cat_dom_sf_prd"/>
</dbReference>
<dbReference type="InterPro" id="IPR002036">
    <property type="entry name" value="YbeY"/>
</dbReference>
<dbReference type="NCBIfam" id="TIGR00043">
    <property type="entry name" value="rRNA maturation RNase YbeY"/>
    <property type="match status" value="1"/>
</dbReference>
<dbReference type="PANTHER" id="PTHR46986">
    <property type="entry name" value="ENDORIBONUCLEASE YBEY, CHLOROPLASTIC"/>
    <property type="match status" value="1"/>
</dbReference>
<dbReference type="PANTHER" id="PTHR46986:SF1">
    <property type="entry name" value="ENDORIBONUCLEASE YBEY, CHLOROPLASTIC"/>
    <property type="match status" value="1"/>
</dbReference>
<dbReference type="Pfam" id="PF02130">
    <property type="entry name" value="YbeY"/>
    <property type="match status" value="1"/>
</dbReference>
<dbReference type="SUPFAM" id="SSF55486">
    <property type="entry name" value="Metalloproteases ('zincins'), catalytic domain"/>
    <property type="match status" value="1"/>
</dbReference>
<protein>
    <recommendedName>
        <fullName evidence="1">Endoribonuclease YbeY</fullName>
        <ecNumber evidence="1">3.1.-.-</ecNumber>
    </recommendedName>
</protein>
<comment type="function">
    <text evidence="1">Single strand-specific metallo-endoribonuclease involved in late-stage 70S ribosome quality control and in maturation of the 3' terminus of the 16S rRNA.</text>
</comment>
<comment type="cofactor">
    <cofactor evidence="1">
        <name>Zn(2+)</name>
        <dbReference type="ChEBI" id="CHEBI:29105"/>
    </cofactor>
    <text evidence="1">Binds 1 zinc ion.</text>
</comment>
<comment type="subcellular location">
    <subcellularLocation>
        <location evidence="1">Cytoplasm</location>
    </subcellularLocation>
</comment>
<comment type="similarity">
    <text evidence="1">Belongs to the endoribonuclease YbeY family.</text>
</comment>
<evidence type="ECO:0000255" key="1">
    <source>
        <dbReference type="HAMAP-Rule" id="MF_00009"/>
    </source>
</evidence>
<feature type="chain" id="PRO_0000284201" description="Endoribonuclease YbeY">
    <location>
        <begin position="1"/>
        <end position="154"/>
    </location>
</feature>
<feature type="binding site" evidence="1">
    <location>
        <position position="113"/>
    </location>
    <ligand>
        <name>Zn(2+)</name>
        <dbReference type="ChEBI" id="CHEBI:29105"/>
        <note>catalytic</note>
    </ligand>
</feature>
<feature type="binding site" evidence="1">
    <location>
        <position position="117"/>
    </location>
    <ligand>
        <name>Zn(2+)</name>
        <dbReference type="ChEBI" id="CHEBI:29105"/>
        <note>catalytic</note>
    </ligand>
</feature>
<feature type="binding site" evidence="1">
    <location>
        <position position="123"/>
    </location>
    <ligand>
        <name>Zn(2+)</name>
        <dbReference type="ChEBI" id="CHEBI:29105"/>
        <note>catalytic</note>
    </ligand>
</feature>
<accession>Q3YQP7</accession>
<reference key="1">
    <citation type="journal article" date="2006" name="J. Bacteriol.">
        <title>The genome of the obligately intracellular bacterium Ehrlichia canis reveals themes of complex membrane structure and immune evasion strategies.</title>
        <authorList>
            <person name="Mavromatis K."/>
            <person name="Doyle C.K."/>
            <person name="Lykidis A."/>
            <person name="Ivanova N."/>
            <person name="Francino M.P."/>
            <person name="Chain P."/>
            <person name="Shin M."/>
            <person name="Malfatti S."/>
            <person name="Larimer F."/>
            <person name="Copeland A."/>
            <person name="Detter J.C."/>
            <person name="Land M."/>
            <person name="Richardson P.M."/>
            <person name="Yu X.J."/>
            <person name="Walker D.H."/>
            <person name="McBride J.W."/>
            <person name="Kyrpides N.C."/>
        </authorList>
    </citation>
    <scope>NUCLEOTIDE SEQUENCE [LARGE SCALE GENOMIC DNA]</scope>
    <source>
        <strain>Jake</strain>
    </source>
</reference>